<organism>
    <name type="scientific">Nanoarchaeum equitans (strain Kin4-M)</name>
    <dbReference type="NCBI Taxonomy" id="228908"/>
    <lineage>
        <taxon>Archaea</taxon>
        <taxon>Nanobdellota</taxon>
        <taxon>Candidatus Nanoarchaeia</taxon>
        <taxon>Nanoarchaeales</taxon>
        <taxon>Nanoarchaeaceae</taxon>
        <taxon>Nanoarchaeum</taxon>
    </lineage>
</organism>
<keyword id="KW-0030">Aminoacyl-tRNA synthetase</keyword>
<keyword id="KW-0067">ATP-binding</keyword>
<keyword id="KW-0963">Cytoplasm</keyword>
<keyword id="KW-0436">Ligase</keyword>
<keyword id="KW-0547">Nucleotide-binding</keyword>
<keyword id="KW-0648">Protein biosynthesis</keyword>
<keyword id="KW-1185">Reference proteome</keyword>
<evidence type="ECO:0000250" key="1"/>
<evidence type="ECO:0000305" key="2"/>
<name>SYV_NANEQ</name>
<proteinExistence type="inferred from homology"/>
<dbReference type="EC" id="6.1.1.9"/>
<dbReference type="EMBL" id="AE017199">
    <property type="protein sequence ID" value="AAR39104.1"/>
    <property type="molecule type" value="Genomic_DNA"/>
</dbReference>
<dbReference type="SMR" id="Q74NF3"/>
<dbReference type="STRING" id="228908.NEQ252"/>
<dbReference type="EnsemblBacteria" id="AAR39104">
    <property type="protein sequence ID" value="AAR39104"/>
    <property type="gene ID" value="NEQ252"/>
</dbReference>
<dbReference type="KEGG" id="neq:NEQ252"/>
<dbReference type="PATRIC" id="fig|228908.8.peg.256"/>
<dbReference type="HOGENOM" id="CLU_001493_0_2_2"/>
<dbReference type="Proteomes" id="UP000000578">
    <property type="component" value="Chromosome"/>
</dbReference>
<dbReference type="GO" id="GO:0005829">
    <property type="term" value="C:cytosol"/>
    <property type="evidence" value="ECO:0007669"/>
    <property type="project" value="TreeGrafter"/>
</dbReference>
<dbReference type="GO" id="GO:0002161">
    <property type="term" value="F:aminoacyl-tRNA deacylase activity"/>
    <property type="evidence" value="ECO:0007669"/>
    <property type="project" value="InterPro"/>
</dbReference>
<dbReference type="GO" id="GO:0005524">
    <property type="term" value="F:ATP binding"/>
    <property type="evidence" value="ECO:0007669"/>
    <property type="project" value="UniProtKB-KW"/>
</dbReference>
<dbReference type="GO" id="GO:0004832">
    <property type="term" value="F:valine-tRNA ligase activity"/>
    <property type="evidence" value="ECO:0007669"/>
    <property type="project" value="UniProtKB-EC"/>
</dbReference>
<dbReference type="GO" id="GO:0006438">
    <property type="term" value="P:valyl-tRNA aminoacylation"/>
    <property type="evidence" value="ECO:0007669"/>
    <property type="project" value="InterPro"/>
</dbReference>
<dbReference type="CDD" id="cd07962">
    <property type="entry name" value="Anticodon_Ia_Val"/>
    <property type="match status" value="1"/>
</dbReference>
<dbReference type="FunFam" id="3.40.50.620:FF:000192">
    <property type="entry name" value="Valine--tRNA ligase"/>
    <property type="match status" value="1"/>
</dbReference>
<dbReference type="Gene3D" id="3.40.50.620">
    <property type="entry name" value="HUPs"/>
    <property type="match status" value="2"/>
</dbReference>
<dbReference type="Gene3D" id="1.10.730.10">
    <property type="entry name" value="Isoleucyl-tRNA Synthetase, Domain 1"/>
    <property type="match status" value="1"/>
</dbReference>
<dbReference type="InterPro" id="IPR002300">
    <property type="entry name" value="aa-tRNA-synth_Ia"/>
</dbReference>
<dbReference type="InterPro" id="IPR033705">
    <property type="entry name" value="Anticodon_Ia_Val"/>
</dbReference>
<dbReference type="InterPro" id="IPR013155">
    <property type="entry name" value="M/V/L/I-tRNA-synth_anticd-bd"/>
</dbReference>
<dbReference type="InterPro" id="IPR014729">
    <property type="entry name" value="Rossmann-like_a/b/a_fold"/>
</dbReference>
<dbReference type="InterPro" id="IPR009080">
    <property type="entry name" value="tRNAsynth_Ia_anticodon-bd"/>
</dbReference>
<dbReference type="InterPro" id="IPR009008">
    <property type="entry name" value="Val/Leu/Ile-tRNA-synth_edit"/>
</dbReference>
<dbReference type="InterPro" id="IPR002303">
    <property type="entry name" value="Valyl-tRNA_ligase"/>
</dbReference>
<dbReference type="NCBIfam" id="NF009687">
    <property type="entry name" value="PRK13208.1"/>
    <property type="match status" value="1"/>
</dbReference>
<dbReference type="PANTHER" id="PTHR11946:SF93">
    <property type="entry name" value="VALINE--TRNA LIGASE, CHLOROPLASTIC_MITOCHONDRIAL 2"/>
    <property type="match status" value="1"/>
</dbReference>
<dbReference type="PANTHER" id="PTHR11946">
    <property type="entry name" value="VALYL-TRNA SYNTHETASES"/>
    <property type="match status" value="1"/>
</dbReference>
<dbReference type="Pfam" id="PF08264">
    <property type="entry name" value="Anticodon_1"/>
    <property type="match status" value="1"/>
</dbReference>
<dbReference type="Pfam" id="PF00133">
    <property type="entry name" value="tRNA-synt_1"/>
    <property type="match status" value="1"/>
</dbReference>
<dbReference type="PRINTS" id="PR00986">
    <property type="entry name" value="TRNASYNTHVAL"/>
</dbReference>
<dbReference type="SUPFAM" id="SSF47323">
    <property type="entry name" value="Anticodon-binding domain of a subclass of class I aminoacyl-tRNA synthetases"/>
    <property type="match status" value="1"/>
</dbReference>
<dbReference type="SUPFAM" id="SSF52374">
    <property type="entry name" value="Nucleotidylyl transferase"/>
    <property type="match status" value="1"/>
</dbReference>
<dbReference type="SUPFAM" id="SSF50677">
    <property type="entry name" value="ValRS/IleRS/LeuRS editing domain"/>
    <property type="match status" value="1"/>
</dbReference>
<reference key="1">
    <citation type="journal article" date="2003" name="Proc. Natl. Acad. Sci. U.S.A.">
        <title>The genome of Nanoarchaeum equitans: insights into early archaeal evolution and derived parasitism.</title>
        <authorList>
            <person name="Waters E."/>
            <person name="Hohn M.J."/>
            <person name="Ahel I."/>
            <person name="Graham D.E."/>
            <person name="Adams M.D."/>
            <person name="Barnstead M."/>
            <person name="Beeson K.Y."/>
            <person name="Bibbs L."/>
            <person name="Bolanos R."/>
            <person name="Keller M."/>
            <person name="Kretz K."/>
            <person name="Lin X."/>
            <person name="Mathur E."/>
            <person name="Ni J."/>
            <person name="Podar M."/>
            <person name="Richardson T."/>
            <person name="Sutton G.G."/>
            <person name="Simon M."/>
            <person name="Soell D."/>
            <person name="Stetter K.O."/>
            <person name="Short J.M."/>
            <person name="Noorderwier M."/>
        </authorList>
    </citation>
    <scope>NUCLEOTIDE SEQUENCE [LARGE SCALE GENOMIC DNA]</scope>
    <source>
        <strain>Kin4-M</strain>
    </source>
</reference>
<accession>Q74NF3</accession>
<comment type="function">
    <text evidence="1">Catalyzes the attachment of valine to tRNA(Val). As ValRS can inadvertently accommodate and process structurally similar amino acids such as threonine, to avoid such errors, it has a 'posttransfer' editing activity that hydrolyzes mischarged Thr-tRNA(Val) in a tRNA-dependent manner (By similarity).</text>
</comment>
<comment type="catalytic activity">
    <reaction>
        <text>tRNA(Val) + L-valine + ATP = L-valyl-tRNA(Val) + AMP + diphosphate</text>
        <dbReference type="Rhea" id="RHEA:10704"/>
        <dbReference type="Rhea" id="RHEA-COMP:9672"/>
        <dbReference type="Rhea" id="RHEA-COMP:9708"/>
        <dbReference type="ChEBI" id="CHEBI:30616"/>
        <dbReference type="ChEBI" id="CHEBI:33019"/>
        <dbReference type="ChEBI" id="CHEBI:57762"/>
        <dbReference type="ChEBI" id="CHEBI:78442"/>
        <dbReference type="ChEBI" id="CHEBI:78537"/>
        <dbReference type="ChEBI" id="CHEBI:456215"/>
        <dbReference type="EC" id="6.1.1.9"/>
    </reaction>
</comment>
<comment type="subcellular location">
    <subcellularLocation>
        <location evidence="1">Cytoplasm</location>
    </subcellularLocation>
</comment>
<comment type="domain">
    <text evidence="1">ValRS has two distinct active sites: one for aminoacylation and one for editing. The misactivated threonine is translocated from the active site to the editing site (By similarity).</text>
</comment>
<comment type="similarity">
    <text evidence="2">Belongs to the class-I aminoacyl-tRNA synthetase family. ValS type 2 subfamily.</text>
</comment>
<sequence>MPYNPKEIEQWYKENYKYFFGEGDKILIIDTPPPYPAPLWHIGAALSYALQDFIARGFRKLGYKVIFPEGFDGNGIPIEMYLEKYEKIPFGSIDREEYIKKCRQILDSWREKMDKILKDLLLSMDFEHRYNTDDPEYRALTQKTFAELWEKGLIYEAEYPINYCPHCKTAIADAEIERKIKKTKLVYIKFKIKDSDDYITVATTRPELLGACKAIIVHPDDERYKKYHNKIAIVPYYNREIPIIPHKMADPNFGTGAVMICSYGDWVDVQIFRELQLKPEKIIDENGRLTIEPVKGLTTKEGREKMIEVLKQLGVVEKIEEIEHSVPVHERCETEIEIIPMKEFYLKQLPFKEEIKKLSKEIEFIPERYRKNLENWIDSITIDWPISRRRWYATEIPLWYCPKCGYIHVAKDGKYHQPWKEEMVCPRCNTKMVGETRVLDTWMDSSITIYYLIKKYSKILGIDEEGLFNNYTLRPQGYEIIRTWLYYTLLRVYQLTGKKAFDFVVINGMGLDKHGRKMSKRYGNVIEPETLLEKYGADTLRYWFAMEISIGEDYRINEQKIAGIMKFMNKVWNIANYISQYQYRETQNLKPTDEWIINYVKYLENKAIEYIRNFEFNKLARELYRFVWDVFANHYIELTKKRAKNNDDSAIYALYFVFERVLNMLSIFSPGIAKYLAKKLYNKDIEKEKLKYWGKVRLDLLYKGEKLIEFNNYVWKLKTSQGKKLKDPISIEIPKELEIFKEDLILLHNIQ</sequence>
<feature type="chain" id="PRO_0000224628" description="Valine--tRNA ligase">
    <location>
        <begin position="1"/>
        <end position="751"/>
    </location>
</feature>
<feature type="binding site" evidence="1">
    <location>
        <position position="520"/>
    </location>
    <ligand>
        <name>ATP</name>
        <dbReference type="ChEBI" id="CHEBI:30616"/>
    </ligand>
</feature>
<gene>
    <name type="primary">valS</name>
    <name type="ordered locus">NEQ252</name>
</gene>
<protein>
    <recommendedName>
        <fullName>Valine--tRNA ligase</fullName>
        <ecNumber>6.1.1.9</ecNumber>
    </recommendedName>
    <alternativeName>
        <fullName>Valyl-tRNA synthetase</fullName>
        <shortName>ValRS</shortName>
    </alternativeName>
</protein>